<organism>
    <name type="scientific">Edwardsiella ictaluri (strain 93-146)</name>
    <dbReference type="NCBI Taxonomy" id="634503"/>
    <lineage>
        <taxon>Bacteria</taxon>
        <taxon>Pseudomonadati</taxon>
        <taxon>Pseudomonadota</taxon>
        <taxon>Gammaproteobacteria</taxon>
        <taxon>Enterobacterales</taxon>
        <taxon>Hafniaceae</taxon>
        <taxon>Edwardsiella</taxon>
    </lineage>
</organism>
<dbReference type="EC" id="1.1.1.94" evidence="1"/>
<dbReference type="EMBL" id="CP001600">
    <property type="protein sequence ID" value="ACR70939.1"/>
    <property type="molecule type" value="Genomic_DNA"/>
</dbReference>
<dbReference type="RefSeq" id="WP_015872972.1">
    <property type="nucleotide sequence ID" value="NZ_CP169062.1"/>
</dbReference>
<dbReference type="SMR" id="C5BC33"/>
<dbReference type="STRING" id="67780.B6E78_10650"/>
<dbReference type="GeneID" id="69540640"/>
<dbReference type="KEGG" id="eic:NT01EI_3815"/>
<dbReference type="PATRIC" id="fig|634503.3.peg.3408"/>
<dbReference type="HOGENOM" id="CLU_033449_0_2_6"/>
<dbReference type="OrthoDB" id="9812273at2"/>
<dbReference type="UniPathway" id="UPA00940"/>
<dbReference type="Proteomes" id="UP000001485">
    <property type="component" value="Chromosome"/>
</dbReference>
<dbReference type="GO" id="GO:0005829">
    <property type="term" value="C:cytosol"/>
    <property type="evidence" value="ECO:0007669"/>
    <property type="project" value="TreeGrafter"/>
</dbReference>
<dbReference type="GO" id="GO:0047952">
    <property type="term" value="F:glycerol-3-phosphate dehydrogenase [NAD(P)+] activity"/>
    <property type="evidence" value="ECO:0007669"/>
    <property type="project" value="UniProtKB-UniRule"/>
</dbReference>
<dbReference type="GO" id="GO:0051287">
    <property type="term" value="F:NAD binding"/>
    <property type="evidence" value="ECO:0007669"/>
    <property type="project" value="InterPro"/>
</dbReference>
<dbReference type="GO" id="GO:0005975">
    <property type="term" value="P:carbohydrate metabolic process"/>
    <property type="evidence" value="ECO:0007669"/>
    <property type="project" value="InterPro"/>
</dbReference>
<dbReference type="GO" id="GO:0046167">
    <property type="term" value="P:glycerol-3-phosphate biosynthetic process"/>
    <property type="evidence" value="ECO:0007669"/>
    <property type="project" value="UniProtKB-UniRule"/>
</dbReference>
<dbReference type="GO" id="GO:0046168">
    <property type="term" value="P:glycerol-3-phosphate catabolic process"/>
    <property type="evidence" value="ECO:0007669"/>
    <property type="project" value="InterPro"/>
</dbReference>
<dbReference type="GO" id="GO:0046474">
    <property type="term" value="P:glycerophospholipid biosynthetic process"/>
    <property type="evidence" value="ECO:0007669"/>
    <property type="project" value="TreeGrafter"/>
</dbReference>
<dbReference type="FunFam" id="1.10.1040.10:FF:000001">
    <property type="entry name" value="Glycerol-3-phosphate dehydrogenase [NAD(P)+]"/>
    <property type="match status" value="1"/>
</dbReference>
<dbReference type="FunFam" id="3.40.50.720:FF:000019">
    <property type="entry name" value="Glycerol-3-phosphate dehydrogenase [NAD(P)+]"/>
    <property type="match status" value="1"/>
</dbReference>
<dbReference type="Gene3D" id="1.10.1040.10">
    <property type="entry name" value="N-(1-d-carboxylethyl)-l-norvaline Dehydrogenase, domain 2"/>
    <property type="match status" value="1"/>
</dbReference>
<dbReference type="Gene3D" id="3.40.50.720">
    <property type="entry name" value="NAD(P)-binding Rossmann-like Domain"/>
    <property type="match status" value="1"/>
</dbReference>
<dbReference type="HAMAP" id="MF_00394">
    <property type="entry name" value="NAD_Glyc3P_dehydrog"/>
    <property type="match status" value="1"/>
</dbReference>
<dbReference type="InterPro" id="IPR008927">
    <property type="entry name" value="6-PGluconate_DH-like_C_sf"/>
</dbReference>
<dbReference type="InterPro" id="IPR013328">
    <property type="entry name" value="6PGD_dom2"/>
</dbReference>
<dbReference type="InterPro" id="IPR006168">
    <property type="entry name" value="G3P_DH_NAD-dep"/>
</dbReference>
<dbReference type="InterPro" id="IPR006109">
    <property type="entry name" value="G3P_DH_NAD-dep_C"/>
</dbReference>
<dbReference type="InterPro" id="IPR011128">
    <property type="entry name" value="G3P_DH_NAD-dep_N"/>
</dbReference>
<dbReference type="InterPro" id="IPR036291">
    <property type="entry name" value="NAD(P)-bd_dom_sf"/>
</dbReference>
<dbReference type="NCBIfam" id="NF000939">
    <property type="entry name" value="PRK00094.1-1"/>
    <property type="match status" value="1"/>
</dbReference>
<dbReference type="NCBIfam" id="NF000940">
    <property type="entry name" value="PRK00094.1-2"/>
    <property type="match status" value="1"/>
</dbReference>
<dbReference type="NCBIfam" id="NF000942">
    <property type="entry name" value="PRK00094.1-4"/>
    <property type="match status" value="1"/>
</dbReference>
<dbReference type="PANTHER" id="PTHR11728">
    <property type="entry name" value="GLYCEROL-3-PHOSPHATE DEHYDROGENASE"/>
    <property type="match status" value="1"/>
</dbReference>
<dbReference type="PANTHER" id="PTHR11728:SF1">
    <property type="entry name" value="GLYCEROL-3-PHOSPHATE DEHYDROGENASE [NAD(+)] 2, CHLOROPLASTIC"/>
    <property type="match status" value="1"/>
</dbReference>
<dbReference type="Pfam" id="PF07479">
    <property type="entry name" value="NAD_Gly3P_dh_C"/>
    <property type="match status" value="1"/>
</dbReference>
<dbReference type="Pfam" id="PF01210">
    <property type="entry name" value="NAD_Gly3P_dh_N"/>
    <property type="match status" value="1"/>
</dbReference>
<dbReference type="PIRSF" id="PIRSF000114">
    <property type="entry name" value="Glycerol-3-P_dh"/>
    <property type="match status" value="1"/>
</dbReference>
<dbReference type="PRINTS" id="PR00077">
    <property type="entry name" value="GPDHDRGNASE"/>
</dbReference>
<dbReference type="SUPFAM" id="SSF48179">
    <property type="entry name" value="6-phosphogluconate dehydrogenase C-terminal domain-like"/>
    <property type="match status" value="1"/>
</dbReference>
<dbReference type="SUPFAM" id="SSF51735">
    <property type="entry name" value="NAD(P)-binding Rossmann-fold domains"/>
    <property type="match status" value="1"/>
</dbReference>
<dbReference type="PROSITE" id="PS00957">
    <property type="entry name" value="NAD_G3PDH"/>
    <property type="match status" value="1"/>
</dbReference>
<protein>
    <recommendedName>
        <fullName evidence="1">Glycerol-3-phosphate dehydrogenase [NAD(P)+]</fullName>
        <ecNumber evidence="1">1.1.1.94</ecNumber>
    </recommendedName>
    <alternativeName>
        <fullName evidence="1">NAD(P)(+)-dependent glycerol-3-phosphate dehydrogenase</fullName>
    </alternativeName>
    <alternativeName>
        <fullName evidence="1">NAD(P)H-dependent dihydroxyacetone-phosphate reductase</fullName>
    </alternativeName>
</protein>
<comment type="function">
    <text evidence="1">Catalyzes the reduction of the glycolytic intermediate dihydroxyacetone phosphate (DHAP) to sn-glycerol 3-phosphate (G3P), the key precursor for phospholipid synthesis.</text>
</comment>
<comment type="catalytic activity">
    <reaction evidence="1">
        <text>sn-glycerol 3-phosphate + NAD(+) = dihydroxyacetone phosphate + NADH + H(+)</text>
        <dbReference type="Rhea" id="RHEA:11092"/>
        <dbReference type="ChEBI" id="CHEBI:15378"/>
        <dbReference type="ChEBI" id="CHEBI:57540"/>
        <dbReference type="ChEBI" id="CHEBI:57597"/>
        <dbReference type="ChEBI" id="CHEBI:57642"/>
        <dbReference type="ChEBI" id="CHEBI:57945"/>
        <dbReference type="EC" id="1.1.1.94"/>
    </reaction>
    <physiologicalReaction direction="right-to-left" evidence="1">
        <dbReference type="Rhea" id="RHEA:11094"/>
    </physiologicalReaction>
</comment>
<comment type="catalytic activity">
    <reaction evidence="1">
        <text>sn-glycerol 3-phosphate + NADP(+) = dihydroxyacetone phosphate + NADPH + H(+)</text>
        <dbReference type="Rhea" id="RHEA:11096"/>
        <dbReference type="ChEBI" id="CHEBI:15378"/>
        <dbReference type="ChEBI" id="CHEBI:57597"/>
        <dbReference type="ChEBI" id="CHEBI:57642"/>
        <dbReference type="ChEBI" id="CHEBI:57783"/>
        <dbReference type="ChEBI" id="CHEBI:58349"/>
        <dbReference type="EC" id="1.1.1.94"/>
    </reaction>
    <physiologicalReaction direction="right-to-left" evidence="1">
        <dbReference type="Rhea" id="RHEA:11098"/>
    </physiologicalReaction>
</comment>
<comment type="pathway">
    <text evidence="1">Membrane lipid metabolism; glycerophospholipid metabolism.</text>
</comment>
<comment type="subcellular location">
    <subcellularLocation>
        <location evidence="1">Cytoplasm</location>
    </subcellularLocation>
</comment>
<comment type="similarity">
    <text evidence="1">Belongs to the NAD-dependent glycerol-3-phosphate dehydrogenase family.</text>
</comment>
<evidence type="ECO:0000255" key="1">
    <source>
        <dbReference type="HAMAP-Rule" id="MF_00394"/>
    </source>
</evidence>
<keyword id="KW-0963">Cytoplasm</keyword>
<keyword id="KW-0444">Lipid biosynthesis</keyword>
<keyword id="KW-0443">Lipid metabolism</keyword>
<keyword id="KW-0520">NAD</keyword>
<keyword id="KW-0521">NADP</keyword>
<keyword id="KW-0547">Nucleotide-binding</keyword>
<keyword id="KW-0560">Oxidoreductase</keyword>
<keyword id="KW-0594">Phospholipid biosynthesis</keyword>
<keyword id="KW-1208">Phospholipid metabolism</keyword>
<accession>C5BC33</accession>
<feature type="chain" id="PRO_1000205858" description="Glycerol-3-phosphate dehydrogenase [NAD(P)+]">
    <location>
        <begin position="1"/>
        <end position="338"/>
    </location>
</feature>
<feature type="active site" description="Proton acceptor" evidence="1">
    <location>
        <position position="195"/>
    </location>
</feature>
<feature type="binding site" evidence="1">
    <location>
        <position position="15"/>
    </location>
    <ligand>
        <name>NADPH</name>
        <dbReference type="ChEBI" id="CHEBI:57783"/>
    </ligand>
</feature>
<feature type="binding site" evidence="1">
    <location>
        <position position="16"/>
    </location>
    <ligand>
        <name>NADPH</name>
        <dbReference type="ChEBI" id="CHEBI:57783"/>
    </ligand>
</feature>
<feature type="binding site" evidence="1">
    <location>
        <position position="36"/>
    </location>
    <ligand>
        <name>NADPH</name>
        <dbReference type="ChEBI" id="CHEBI:57783"/>
    </ligand>
</feature>
<feature type="binding site" evidence="1">
    <location>
        <position position="110"/>
    </location>
    <ligand>
        <name>NADPH</name>
        <dbReference type="ChEBI" id="CHEBI:57783"/>
    </ligand>
</feature>
<feature type="binding site" evidence="1">
    <location>
        <position position="110"/>
    </location>
    <ligand>
        <name>sn-glycerol 3-phosphate</name>
        <dbReference type="ChEBI" id="CHEBI:57597"/>
    </ligand>
</feature>
<feature type="binding site" evidence="1">
    <location>
        <position position="139"/>
    </location>
    <ligand>
        <name>sn-glycerol 3-phosphate</name>
        <dbReference type="ChEBI" id="CHEBI:57597"/>
    </ligand>
</feature>
<feature type="binding site" evidence="1">
    <location>
        <position position="141"/>
    </location>
    <ligand>
        <name>sn-glycerol 3-phosphate</name>
        <dbReference type="ChEBI" id="CHEBI:57597"/>
    </ligand>
</feature>
<feature type="binding site" evidence="1">
    <location>
        <position position="143"/>
    </location>
    <ligand>
        <name>NADPH</name>
        <dbReference type="ChEBI" id="CHEBI:57783"/>
    </ligand>
</feature>
<feature type="binding site" evidence="1">
    <location>
        <position position="195"/>
    </location>
    <ligand>
        <name>sn-glycerol 3-phosphate</name>
        <dbReference type="ChEBI" id="CHEBI:57597"/>
    </ligand>
</feature>
<feature type="binding site" evidence="1">
    <location>
        <position position="248"/>
    </location>
    <ligand>
        <name>sn-glycerol 3-phosphate</name>
        <dbReference type="ChEBI" id="CHEBI:57597"/>
    </ligand>
</feature>
<feature type="binding site" evidence="1">
    <location>
        <position position="258"/>
    </location>
    <ligand>
        <name>sn-glycerol 3-phosphate</name>
        <dbReference type="ChEBI" id="CHEBI:57597"/>
    </ligand>
</feature>
<feature type="binding site" evidence="1">
    <location>
        <position position="259"/>
    </location>
    <ligand>
        <name>NADPH</name>
        <dbReference type="ChEBI" id="CHEBI:57783"/>
    </ligand>
</feature>
<feature type="binding site" evidence="1">
    <location>
        <position position="259"/>
    </location>
    <ligand>
        <name>sn-glycerol 3-phosphate</name>
        <dbReference type="ChEBI" id="CHEBI:57597"/>
    </ligand>
</feature>
<feature type="binding site" evidence="1">
    <location>
        <position position="260"/>
    </location>
    <ligand>
        <name>sn-glycerol 3-phosphate</name>
        <dbReference type="ChEBI" id="CHEBI:57597"/>
    </ligand>
</feature>
<feature type="binding site" evidence="1">
    <location>
        <position position="283"/>
    </location>
    <ligand>
        <name>NADPH</name>
        <dbReference type="ChEBI" id="CHEBI:57783"/>
    </ligand>
</feature>
<feature type="binding site" evidence="1">
    <location>
        <position position="285"/>
    </location>
    <ligand>
        <name>NADPH</name>
        <dbReference type="ChEBI" id="CHEBI:57783"/>
    </ligand>
</feature>
<proteinExistence type="inferred from homology"/>
<gene>
    <name evidence="1" type="primary">gpsA</name>
    <name type="ordered locus">NT01EI_3815</name>
</gene>
<reference key="1">
    <citation type="submission" date="2009-03" db="EMBL/GenBank/DDBJ databases">
        <title>Complete genome sequence of Edwardsiella ictaluri 93-146.</title>
        <authorList>
            <person name="Williams M.L."/>
            <person name="Gillaspy A.F."/>
            <person name="Dyer D.W."/>
            <person name="Thune R.L."/>
            <person name="Waldbieser G.C."/>
            <person name="Schuster S.C."/>
            <person name="Gipson J."/>
            <person name="Zaitshik J."/>
            <person name="Landry C."/>
            <person name="Lawrence M.L."/>
        </authorList>
    </citation>
    <scope>NUCLEOTIDE SEQUENCE [LARGE SCALE GENOMIC DNA]</scope>
    <source>
        <strain>93-146</strain>
    </source>
</reference>
<sequence length="338" mass="35869">MTTPVASMAVIGAGSYGTALAITLARNGHPVVLWGHDPAHIAALEAARCNQAFLPDVRFPDTLSLESDLSRTLSASRDVLVVVPSHVFGDVLRQLRPHLRPDARLVWATKGLEAETGRLLQDVACEALGPDIPLAVISGPTFAKELAAGLPTAIAVASQDAAFAEVLQQLLHCGKSFRVYRNPDFIGVQLGGAVKNVIAIGAGMSDGIGFGANARTALITRGLAEMSRLGVALGADPATFMGMAGLGDLVLTCTDNQSRNRRFGIMLGQGMGVDEAQVQIGQVVEGYRNTKEVMSLAQRYGVEMPITEQIYQVLYCHKDVREAALSLLGRASRDENAR</sequence>
<name>GPDA_EDWI9</name>